<accession>Q1ZXR0</accession>
<reference key="1">
    <citation type="journal article" date="2005" name="Nature">
        <title>The genome of the social amoeba Dictyostelium discoideum.</title>
        <authorList>
            <person name="Eichinger L."/>
            <person name="Pachebat J.A."/>
            <person name="Gloeckner G."/>
            <person name="Rajandream M.A."/>
            <person name="Sucgang R."/>
            <person name="Berriman M."/>
            <person name="Song J."/>
            <person name="Olsen R."/>
            <person name="Szafranski K."/>
            <person name="Xu Q."/>
            <person name="Tunggal B."/>
            <person name="Kummerfeld S."/>
            <person name="Madera M."/>
            <person name="Konfortov B.A."/>
            <person name="Rivero F."/>
            <person name="Bankier A.T."/>
            <person name="Lehmann R."/>
            <person name="Hamlin N."/>
            <person name="Davies R."/>
            <person name="Gaudet P."/>
            <person name="Fey P."/>
            <person name="Pilcher K."/>
            <person name="Chen G."/>
            <person name="Saunders D."/>
            <person name="Sodergren E.J."/>
            <person name="Davis P."/>
            <person name="Kerhornou A."/>
            <person name="Nie X."/>
            <person name="Hall N."/>
            <person name="Anjard C."/>
            <person name="Hemphill L."/>
            <person name="Bason N."/>
            <person name="Farbrother P."/>
            <person name="Desany B."/>
            <person name="Just E."/>
            <person name="Morio T."/>
            <person name="Rost R."/>
            <person name="Churcher C.M."/>
            <person name="Cooper J."/>
            <person name="Haydock S."/>
            <person name="van Driessche N."/>
            <person name="Cronin A."/>
            <person name="Goodhead I."/>
            <person name="Muzny D.M."/>
            <person name="Mourier T."/>
            <person name="Pain A."/>
            <person name="Lu M."/>
            <person name="Harper D."/>
            <person name="Lindsay R."/>
            <person name="Hauser H."/>
            <person name="James K.D."/>
            <person name="Quiles M."/>
            <person name="Madan Babu M."/>
            <person name="Saito T."/>
            <person name="Buchrieser C."/>
            <person name="Wardroper A."/>
            <person name="Felder M."/>
            <person name="Thangavelu M."/>
            <person name="Johnson D."/>
            <person name="Knights A."/>
            <person name="Loulseged H."/>
            <person name="Mungall K.L."/>
            <person name="Oliver K."/>
            <person name="Price C."/>
            <person name="Quail M.A."/>
            <person name="Urushihara H."/>
            <person name="Hernandez J."/>
            <person name="Rabbinowitsch E."/>
            <person name="Steffen D."/>
            <person name="Sanders M."/>
            <person name="Ma J."/>
            <person name="Kohara Y."/>
            <person name="Sharp S."/>
            <person name="Simmonds M.N."/>
            <person name="Spiegler S."/>
            <person name="Tivey A."/>
            <person name="Sugano S."/>
            <person name="White B."/>
            <person name="Walker D."/>
            <person name="Woodward J.R."/>
            <person name="Winckler T."/>
            <person name="Tanaka Y."/>
            <person name="Shaulsky G."/>
            <person name="Schleicher M."/>
            <person name="Weinstock G.M."/>
            <person name="Rosenthal A."/>
            <person name="Cox E.C."/>
            <person name="Chisholm R.L."/>
            <person name="Gibbs R.A."/>
            <person name="Loomis W.F."/>
            <person name="Platzer M."/>
            <person name="Kay R.R."/>
            <person name="Williams J.G."/>
            <person name="Dear P.H."/>
            <person name="Noegel A.A."/>
            <person name="Barrell B.G."/>
            <person name="Kuspa A."/>
        </authorList>
    </citation>
    <scope>NUCLEOTIDE SEQUENCE [LARGE SCALE GENOMIC DNA]</scope>
    <source>
        <strain>AX4</strain>
    </source>
</reference>
<reference key="2">
    <citation type="journal article" date="2008" name="BMC Microbiol.">
        <title>Dictyostelium transcriptional responses to Pseudomonas aeruginosa: common and specific effects from PAO1 and PA14 strains.</title>
        <authorList>
            <person name="Carilla-Latorre S."/>
            <person name="Calvo-Garrido J."/>
            <person name="Bloomfield G."/>
            <person name="Skelton J."/>
            <person name="Kay R.R."/>
            <person name="Ivens A."/>
            <person name="Martinez J.L."/>
            <person name="Escalante R."/>
        </authorList>
    </citation>
    <scope>INDUCTION [LARGE SCALE ANALYSIS]</scope>
</reference>
<keyword id="KW-0175">Coiled coil</keyword>
<keyword id="KW-0963">Cytoplasm</keyword>
<keyword id="KW-0479">Metal-binding</keyword>
<keyword id="KW-1185">Reference proteome</keyword>
<keyword id="KW-0677">Repeat</keyword>
<keyword id="KW-0862">Zinc</keyword>
<keyword id="KW-0863">Zinc-finger</keyword>
<proteinExistence type="evidence at transcript level"/>
<protein>
    <recommendedName>
        <fullName>TNF receptor-associated factor family protein DDB_G0268444</fullName>
    </recommendedName>
</protein>
<organism>
    <name type="scientific">Dictyostelium discoideum</name>
    <name type="common">Social amoeba</name>
    <dbReference type="NCBI Taxonomy" id="44689"/>
    <lineage>
        <taxon>Eukaryota</taxon>
        <taxon>Amoebozoa</taxon>
        <taxon>Evosea</taxon>
        <taxon>Eumycetozoa</taxon>
        <taxon>Dictyostelia</taxon>
        <taxon>Dictyosteliales</taxon>
        <taxon>Dictyosteliaceae</taxon>
        <taxon>Dictyostelium</taxon>
    </lineage>
</organism>
<dbReference type="EMBL" id="AAFI02000003">
    <property type="protein sequence ID" value="EAS66947.1"/>
    <property type="molecule type" value="Genomic_DNA"/>
</dbReference>
<dbReference type="RefSeq" id="XP_001134485.1">
    <property type="nucleotide sequence ID" value="XM_001134485.1"/>
</dbReference>
<dbReference type="SMR" id="Q1ZXR0"/>
<dbReference type="FunCoup" id="Q1ZXR0">
    <property type="interactions" value="7"/>
</dbReference>
<dbReference type="STRING" id="44689.Q1ZXR0"/>
<dbReference type="PaxDb" id="44689-DDB0232346"/>
<dbReference type="EnsemblProtists" id="EAS66947">
    <property type="protein sequence ID" value="EAS66947"/>
    <property type="gene ID" value="DDB_G0268444"/>
</dbReference>
<dbReference type="GeneID" id="8616387"/>
<dbReference type="KEGG" id="ddi:DDB_G0268444"/>
<dbReference type="dictyBase" id="DDB_G0268444">
    <property type="gene designation" value="trafN"/>
</dbReference>
<dbReference type="VEuPathDB" id="AmoebaDB:DDB_G0268444"/>
<dbReference type="eggNOG" id="KOG0297">
    <property type="taxonomic scope" value="Eukaryota"/>
</dbReference>
<dbReference type="HOGENOM" id="CLU_040980_0_0_1"/>
<dbReference type="InParanoid" id="Q1ZXR0"/>
<dbReference type="OMA" id="CEFRLEY"/>
<dbReference type="PhylomeDB" id="Q1ZXR0"/>
<dbReference type="PRO" id="PR:Q1ZXR0"/>
<dbReference type="Proteomes" id="UP000002195">
    <property type="component" value="Chromosome 1"/>
</dbReference>
<dbReference type="GO" id="GO:0005737">
    <property type="term" value="C:cytoplasm"/>
    <property type="evidence" value="ECO:0000318"/>
    <property type="project" value="GO_Central"/>
</dbReference>
<dbReference type="GO" id="GO:0003676">
    <property type="term" value="F:nucleic acid binding"/>
    <property type="evidence" value="ECO:0007669"/>
    <property type="project" value="InterPro"/>
</dbReference>
<dbReference type="GO" id="GO:0000166">
    <property type="term" value="F:nucleotide binding"/>
    <property type="evidence" value="ECO:0007669"/>
    <property type="project" value="InterPro"/>
</dbReference>
<dbReference type="GO" id="GO:0008270">
    <property type="term" value="F:zinc ion binding"/>
    <property type="evidence" value="ECO:0007669"/>
    <property type="project" value="UniProtKB-KW"/>
</dbReference>
<dbReference type="CDD" id="cd00121">
    <property type="entry name" value="MATH"/>
    <property type="match status" value="1"/>
</dbReference>
<dbReference type="Gene3D" id="2.60.210.10">
    <property type="entry name" value="Apoptosis, Tumor Necrosis Factor Receptor Associated Protein 2, Chain A"/>
    <property type="match status" value="1"/>
</dbReference>
<dbReference type="Gene3D" id="3.30.40.10">
    <property type="entry name" value="Zinc/RING finger domain, C3HC4 (zinc finger)"/>
    <property type="match status" value="3"/>
</dbReference>
<dbReference type="InterPro" id="IPR017964">
    <property type="entry name" value="DNA-dir_DNA_pol_B_CS"/>
</dbReference>
<dbReference type="InterPro" id="IPR002083">
    <property type="entry name" value="MATH/TRAF_dom"/>
</dbReference>
<dbReference type="InterPro" id="IPR008974">
    <property type="entry name" value="TRAF-like"/>
</dbReference>
<dbReference type="InterPro" id="IPR013083">
    <property type="entry name" value="Znf_RING/FYVE/PHD"/>
</dbReference>
<dbReference type="InterPro" id="IPR001293">
    <property type="entry name" value="Znf_TRAF"/>
</dbReference>
<dbReference type="PANTHER" id="PTHR10131:SF65">
    <property type="entry name" value="RING FINGER PROTEIN DG17-RELATED"/>
    <property type="match status" value="1"/>
</dbReference>
<dbReference type="PANTHER" id="PTHR10131">
    <property type="entry name" value="TNF RECEPTOR ASSOCIATED FACTOR"/>
    <property type="match status" value="1"/>
</dbReference>
<dbReference type="Pfam" id="PF22486">
    <property type="entry name" value="MATH_2"/>
    <property type="match status" value="1"/>
</dbReference>
<dbReference type="Pfam" id="PF02176">
    <property type="entry name" value="zf-TRAF"/>
    <property type="match status" value="2"/>
</dbReference>
<dbReference type="SUPFAM" id="SSF57850">
    <property type="entry name" value="RING/U-box"/>
    <property type="match status" value="1"/>
</dbReference>
<dbReference type="SUPFAM" id="SSF49599">
    <property type="entry name" value="TRAF domain-like"/>
    <property type="match status" value="3"/>
</dbReference>
<dbReference type="PROSITE" id="PS50144">
    <property type="entry name" value="MATH"/>
    <property type="match status" value="1"/>
</dbReference>
<dbReference type="PROSITE" id="PS50145">
    <property type="entry name" value="ZF_TRAF"/>
    <property type="match status" value="2"/>
</dbReference>
<evidence type="ECO:0000250" key="1"/>
<evidence type="ECO:0000255" key="2"/>
<evidence type="ECO:0000255" key="3">
    <source>
        <dbReference type="PROSITE-ProRule" id="PRU00129"/>
    </source>
</evidence>
<evidence type="ECO:0000255" key="4">
    <source>
        <dbReference type="PROSITE-ProRule" id="PRU00207"/>
    </source>
</evidence>
<evidence type="ECO:0000269" key="5">
    <source>
    </source>
</evidence>
<evidence type="ECO:0000305" key="6"/>
<name>Y8444_DICDI</name>
<sequence>MAEYTHYFIQYNLTDIFYEDVNIEKYSCSICYESVYKKEIYQCKEIHWFCKTCWAESLFKKKECMICRCIVKSISELSRNRFIEQDFLNIKVNCPNSFKYIDENKNNNNKIKDLENGCKDIITIGEIEKHLKQCKFTHIKCKFIGCNKIIRLNQVEKHEKEQCEFRLEYCRYCDTDGITSRSLENHYKECPKFIVKCSENGCTVQLERSQLESHIEKQCQMVMIDCPYKIYGCEQSNRFPKSNLTQHLSSINHTLAMGSMIESQSLQIKETNIKYENLLNKINKLEQLETESKCDQLYDKFYQFESKIDKKLNNLQLDLYPKDNQQPQQKEQKEQKEQKEQQERIKFDDLFEKVSKVNSYFINGCLLKYKNRWSISNYLTESRKYRKITSPSFKIYDKKFKLVIYPQGKDDGSYTSLFLKSDSINPIKVFYKFVLLNFKDESKNLIFKNKSIMDKEKSVGCHYFIKSTEPGKKPEVWLKDDSLVIDFSIEVNINNDIKPLES</sequence>
<gene>
    <name type="ORF">DDB_G0268444</name>
</gene>
<feature type="chain" id="PRO_0000393765" description="TNF receptor-associated factor family protein DDB_G0268444">
    <location>
        <begin position="1"/>
        <end position="502"/>
    </location>
</feature>
<feature type="domain" description="MATH" evidence="3">
    <location>
        <begin position="368"/>
        <end position="489"/>
    </location>
</feature>
<feature type="zinc finger region" description="RING-type; degenerate">
    <location>
        <begin position="28"/>
        <end position="68"/>
    </location>
</feature>
<feature type="zinc finger region" description="TRAF-type 1" evidence="4">
    <location>
        <begin position="129"/>
        <end position="183"/>
    </location>
</feature>
<feature type="zinc finger region" description="TRAF-type 2" evidence="4">
    <location>
        <begin position="185"/>
        <end position="243"/>
    </location>
</feature>
<feature type="coiled-coil region" evidence="2">
    <location>
        <begin position="261"/>
        <end position="295"/>
    </location>
</feature>
<comment type="function">
    <text evidence="1">Probable adapter protein and signal transducer that links members of the tumor necrosis factor receptor family to different signaling pathways by association with the receptor cytoplasmic domain and kinases.</text>
</comment>
<comment type="subcellular location">
    <subcellularLocation>
        <location evidence="1">Cytoplasm</location>
    </subcellularLocation>
</comment>
<comment type="induction">
    <text evidence="5">Down-regulated by Pseudomonas aeruginosa, PAO1 strain and up-regulated by PA14 strain infection.</text>
</comment>
<comment type="domain">
    <text>The MATH/TRAF domain binds to receptor cytoplasmic domains.</text>
</comment>
<comment type="similarity">
    <text evidence="6">Belongs to the TNF receptor-associated factor family. A subfamily.</text>
</comment>